<feature type="chain" id="PRO_1000072383" description="UPF0173 metal-dependent hydrolase NWMN_1601">
    <location>
        <begin position="1"/>
        <end position="229"/>
    </location>
</feature>
<keyword id="KW-0378">Hydrolase</keyword>
<accession>A6QHP1</accession>
<organism>
    <name type="scientific">Staphylococcus aureus (strain Newman)</name>
    <dbReference type="NCBI Taxonomy" id="426430"/>
    <lineage>
        <taxon>Bacteria</taxon>
        <taxon>Bacillati</taxon>
        <taxon>Bacillota</taxon>
        <taxon>Bacilli</taxon>
        <taxon>Bacillales</taxon>
        <taxon>Staphylococcaceae</taxon>
        <taxon>Staphylococcus</taxon>
    </lineage>
</organism>
<name>Y1601_STAAE</name>
<dbReference type="EMBL" id="AP009351">
    <property type="protein sequence ID" value="BAF67873.1"/>
    <property type="molecule type" value="Genomic_DNA"/>
</dbReference>
<dbReference type="RefSeq" id="WP_000777188.1">
    <property type="nucleotide sequence ID" value="NZ_JBBIAE010000009.1"/>
</dbReference>
<dbReference type="SMR" id="A6QHP1"/>
<dbReference type="KEGG" id="sae:NWMN_1601"/>
<dbReference type="HOGENOM" id="CLU_070010_4_1_9"/>
<dbReference type="Proteomes" id="UP000006386">
    <property type="component" value="Chromosome"/>
</dbReference>
<dbReference type="GO" id="GO:0016787">
    <property type="term" value="F:hydrolase activity"/>
    <property type="evidence" value="ECO:0007669"/>
    <property type="project" value="UniProtKB-UniRule"/>
</dbReference>
<dbReference type="CDD" id="cd06262">
    <property type="entry name" value="metallo-hydrolase-like_MBL-fold"/>
    <property type="match status" value="1"/>
</dbReference>
<dbReference type="Gene3D" id="3.60.15.10">
    <property type="entry name" value="Ribonuclease Z/Hydroxyacylglutathione hydrolase-like"/>
    <property type="match status" value="1"/>
</dbReference>
<dbReference type="HAMAP" id="MF_00457">
    <property type="entry name" value="UPF0173"/>
    <property type="match status" value="1"/>
</dbReference>
<dbReference type="InterPro" id="IPR001279">
    <property type="entry name" value="Metallo-B-lactamas"/>
</dbReference>
<dbReference type="InterPro" id="IPR036866">
    <property type="entry name" value="RibonucZ/Hydroxyglut_hydro"/>
</dbReference>
<dbReference type="InterPro" id="IPR022877">
    <property type="entry name" value="UPF0173"/>
</dbReference>
<dbReference type="InterPro" id="IPR050114">
    <property type="entry name" value="UPF0173_UPF0282_UlaG_hydrolase"/>
</dbReference>
<dbReference type="NCBIfam" id="NF001911">
    <property type="entry name" value="PRK00685.1"/>
    <property type="match status" value="1"/>
</dbReference>
<dbReference type="PANTHER" id="PTHR43546:SF3">
    <property type="entry name" value="UPF0173 METAL-DEPENDENT HYDROLASE MJ1163"/>
    <property type="match status" value="1"/>
</dbReference>
<dbReference type="PANTHER" id="PTHR43546">
    <property type="entry name" value="UPF0173 METAL-DEPENDENT HYDROLASE MJ1163-RELATED"/>
    <property type="match status" value="1"/>
</dbReference>
<dbReference type="Pfam" id="PF12706">
    <property type="entry name" value="Lactamase_B_2"/>
    <property type="match status" value="1"/>
</dbReference>
<dbReference type="SMART" id="SM00849">
    <property type="entry name" value="Lactamase_B"/>
    <property type="match status" value="1"/>
</dbReference>
<dbReference type="SUPFAM" id="SSF56281">
    <property type="entry name" value="Metallo-hydrolase/oxidoreductase"/>
    <property type="match status" value="1"/>
</dbReference>
<reference key="1">
    <citation type="journal article" date="2008" name="J. Bacteriol.">
        <title>Genome sequence of Staphylococcus aureus strain Newman and comparative analysis of staphylococcal genomes: polymorphism and evolution of two major pathogenicity islands.</title>
        <authorList>
            <person name="Baba T."/>
            <person name="Bae T."/>
            <person name="Schneewind O."/>
            <person name="Takeuchi F."/>
            <person name="Hiramatsu K."/>
        </authorList>
    </citation>
    <scope>NUCLEOTIDE SEQUENCE [LARGE SCALE GENOMIC DNA]</scope>
    <source>
        <strain>Newman</strain>
    </source>
</reference>
<evidence type="ECO:0000255" key="1">
    <source>
        <dbReference type="HAMAP-Rule" id="MF_00457"/>
    </source>
</evidence>
<gene>
    <name type="ordered locus">NWMN_1601</name>
</gene>
<comment type="similarity">
    <text evidence="1">Belongs to the UPF0173 family.</text>
</comment>
<proteinExistence type="inferred from homology"/>
<sequence>MKLSFHGQSTIYLEGNNKKVIVDPFISNNPKCDLNIETVQVDYIVLTHGHFDHFGDVVELAKKTGATVIGSAEMADYLSSYHGVENVHGMNIGGKANFDFGSVKFVQAFHSSSFTHENGIPVYLGMPMGIVFEVEGKTIYHTGDTGLFSDMSLIAKRHPVDVCFVPIGDNFTMGIDDASYAINEFIKPKISVPIHYDTFPLIEQDPQQFKDAVNVGDVQILKPGESVQF</sequence>
<protein>
    <recommendedName>
        <fullName evidence="1">UPF0173 metal-dependent hydrolase NWMN_1601</fullName>
    </recommendedName>
</protein>